<feature type="chain" id="PRO_0000363971" description="Probable inactive O-methyltransferase 11">
    <location>
        <begin position="1"/>
        <end position="331"/>
    </location>
</feature>
<feature type="binding site" evidence="1">
    <location>
        <position position="179"/>
    </location>
    <ligand>
        <name>S-adenosyl-L-methionine</name>
        <dbReference type="ChEBI" id="CHEBI:59789"/>
    </ligand>
</feature>
<feature type="binding site" evidence="1">
    <location>
        <position position="202"/>
    </location>
    <ligand>
        <name>S-adenosyl-L-methionine</name>
        <dbReference type="ChEBI" id="CHEBI:59789"/>
    </ligand>
</feature>
<feature type="binding site" evidence="1">
    <location>
        <begin position="224"/>
        <end position="226"/>
    </location>
    <ligand>
        <name>S-adenosyl-L-methionine</name>
        <dbReference type="ChEBI" id="CHEBI:59789"/>
    </ligand>
</feature>
<feature type="binding site" evidence="1">
    <location>
        <position position="225"/>
    </location>
    <ligand>
        <name>S-adenosyl-L-methionine</name>
        <dbReference type="ChEBI" id="CHEBI:59789"/>
    </ligand>
</feature>
<feature type="binding site" evidence="1">
    <location>
        <position position="226"/>
    </location>
    <ligand>
        <name>S-adenosyl-L-methionine</name>
        <dbReference type="ChEBI" id="CHEBI:59789"/>
    </ligand>
</feature>
<feature type="binding site" evidence="1">
    <location>
        <position position="239"/>
    </location>
    <ligand>
        <name>S-adenosyl-L-methionine</name>
        <dbReference type="ChEBI" id="CHEBI:59789"/>
    </ligand>
</feature>
<proteinExistence type="inferred from homology"/>
<sequence>MECSESLELVDKFACGHILSRMFNVVMKHSICDLLEDGPKHYSEISKIIGFKDDSYCYRLMRYFVPRKLFKESVVQVGVFSKTPFSTEFSNNGTLKKLAKFHCNSFHYKLSQVLPETLEIGENQGPSSIGLSDYWEQIEKNEIYKNEFNDGMIGYTTHILKFLKGKIDLSKFETVVDIGGSHGYLIGSLLDRYPNVNGINFDTDMVINSSNEKYQHPRLKHVAGDFFKSVPEADCYLMKLILRCFSDEKCCELLKIISKSMKSNAKIIILDIILDSSKYLNFDTYLDILMMETLDGKQRSLSEWIKLFEMSGFKIDKYESGSPNYLIISKE</sequence>
<name>OMT11_DICDI</name>
<gene>
    <name type="primary">omt11</name>
    <name type="ORF">DDB_G0293886</name>
</gene>
<protein>
    <recommendedName>
        <fullName>Probable inactive O-methyltransferase 11</fullName>
        <ecNumber>2.1.1.-</ecNumber>
    </recommendedName>
</protein>
<accession>Q54B60</accession>
<comment type="similarity">
    <text evidence="1">Belongs to the class I-like SAM-binding methyltransferase superfamily. Cation-independent O-methyltransferase family. COMT subfamily.</text>
</comment>
<dbReference type="EC" id="2.1.1.-"/>
<dbReference type="EMBL" id="AAFI02000223">
    <property type="protein sequence ID" value="EAL60514.1"/>
    <property type="molecule type" value="Genomic_DNA"/>
</dbReference>
<dbReference type="RefSeq" id="XP_628928.1">
    <property type="nucleotide sequence ID" value="XM_628926.1"/>
</dbReference>
<dbReference type="SMR" id="Q54B60"/>
<dbReference type="PaxDb" id="44689-DDB0231349"/>
<dbReference type="EnsemblProtists" id="EAL60514">
    <property type="protein sequence ID" value="EAL60514"/>
    <property type="gene ID" value="DDB_G0293886"/>
</dbReference>
<dbReference type="GeneID" id="8629470"/>
<dbReference type="KEGG" id="ddi:DDB_G0293886"/>
<dbReference type="dictyBase" id="DDB_G0293886">
    <property type="gene designation" value="omt11"/>
</dbReference>
<dbReference type="VEuPathDB" id="AmoebaDB:DDB_G0293886"/>
<dbReference type="eggNOG" id="KOG3178">
    <property type="taxonomic scope" value="Eukaryota"/>
</dbReference>
<dbReference type="HOGENOM" id="CLU_005533_12_0_1"/>
<dbReference type="InParanoid" id="Q54B60"/>
<dbReference type="PhylomeDB" id="Q54B60"/>
<dbReference type="PRO" id="PR:Q54B60"/>
<dbReference type="Proteomes" id="UP000002195">
    <property type="component" value="Chromosome 6"/>
</dbReference>
<dbReference type="GO" id="GO:0008171">
    <property type="term" value="F:O-methyltransferase activity"/>
    <property type="evidence" value="ECO:0000318"/>
    <property type="project" value="GO_Central"/>
</dbReference>
<dbReference type="GO" id="GO:0008757">
    <property type="term" value="F:S-adenosylmethionine-dependent methyltransferase activity"/>
    <property type="evidence" value="ECO:0000318"/>
    <property type="project" value="GO_Central"/>
</dbReference>
<dbReference type="GO" id="GO:0009058">
    <property type="term" value="P:biosynthetic process"/>
    <property type="evidence" value="ECO:0000318"/>
    <property type="project" value="GO_Central"/>
</dbReference>
<dbReference type="GO" id="GO:0032259">
    <property type="term" value="P:methylation"/>
    <property type="evidence" value="ECO:0000318"/>
    <property type="project" value="GO_Central"/>
</dbReference>
<dbReference type="FunFam" id="3.40.50.150:FF:000407">
    <property type="entry name" value="O-methyltransferase 4"/>
    <property type="match status" value="1"/>
</dbReference>
<dbReference type="FunFam" id="1.10.10.10:FF:000895">
    <property type="entry name" value="O-methyltransferase 9"/>
    <property type="match status" value="1"/>
</dbReference>
<dbReference type="Gene3D" id="3.40.50.150">
    <property type="entry name" value="Vaccinia Virus protein VP39"/>
    <property type="match status" value="1"/>
</dbReference>
<dbReference type="Gene3D" id="1.10.10.10">
    <property type="entry name" value="Winged helix-like DNA-binding domain superfamily/Winged helix DNA-binding domain"/>
    <property type="match status" value="1"/>
</dbReference>
<dbReference type="InterPro" id="IPR016461">
    <property type="entry name" value="COMT-like"/>
</dbReference>
<dbReference type="InterPro" id="IPR001077">
    <property type="entry name" value="O_MeTrfase_dom"/>
</dbReference>
<dbReference type="InterPro" id="IPR029063">
    <property type="entry name" value="SAM-dependent_MTases_sf"/>
</dbReference>
<dbReference type="InterPro" id="IPR036388">
    <property type="entry name" value="WH-like_DNA-bd_sf"/>
</dbReference>
<dbReference type="InterPro" id="IPR036390">
    <property type="entry name" value="WH_DNA-bd_sf"/>
</dbReference>
<dbReference type="PANTHER" id="PTHR43712:SF2">
    <property type="entry name" value="O-METHYLTRANSFERASE CICE"/>
    <property type="match status" value="1"/>
</dbReference>
<dbReference type="PANTHER" id="PTHR43712">
    <property type="entry name" value="PUTATIVE (AFU_ORTHOLOGUE AFUA_4G14580)-RELATED"/>
    <property type="match status" value="1"/>
</dbReference>
<dbReference type="Pfam" id="PF00891">
    <property type="entry name" value="Methyltransf_2"/>
    <property type="match status" value="1"/>
</dbReference>
<dbReference type="PIRSF" id="PIRSF005739">
    <property type="entry name" value="O-mtase"/>
    <property type="match status" value="1"/>
</dbReference>
<dbReference type="SUPFAM" id="SSF53335">
    <property type="entry name" value="S-adenosyl-L-methionine-dependent methyltransferases"/>
    <property type="match status" value="1"/>
</dbReference>
<dbReference type="SUPFAM" id="SSF46785">
    <property type="entry name" value="Winged helix' DNA-binding domain"/>
    <property type="match status" value="1"/>
</dbReference>
<dbReference type="PROSITE" id="PS51683">
    <property type="entry name" value="SAM_OMT_II"/>
    <property type="match status" value="1"/>
</dbReference>
<reference key="1">
    <citation type="journal article" date="2005" name="Nature">
        <title>The genome of the social amoeba Dictyostelium discoideum.</title>
        <authorList>
            <person name="Eichinger L."/>
            <person name="Pachebat J.A."/>
            <person name="Gloeckner G."/>
            <person name="Rajandream M.A."/>
            <person name="Sucgang R."/>
            <person name="Berriman M."/>
            <person name="Song J."/>
            <person name="Olsen R."/>
            <person name="Szafranski K."/>
            <person name="Xu Q."/>
            <person name="Tunggal B."/>
            <person name="Kummerfeld S."/>
            <person name="Madera M."/>
            <person name="Konfortov B.A."/>
            <person name="Rivero F."/>
            <person name="Bankier A.T."/>
            <person name="Lehmann R."/>
            <person name="Hamlin N."/>
            <person name="Davies R."/>
            <person name="Gaudet P."/>
            <person name="Fey P."/>
            <person name="Pilcher K."/>
            <person name="Chen G."/>
            <person name="Saunders D."/>
            <person name="Sodergren E.J."/>
            <person name="Davis P."/>
            <person name="Kerhornou A."/>
            <person name="Nie X."/>
            <person name="Hall N."/>
            <person name="Anjard C."/>
            <person name="Hemphill L."/>
            <person name="Bason N."/>
            <person name="Farbrother P."/>
            <person name="Desany B."/>
            <person name="Just E."/>
            <person name="Morio T."/>
            <person name="Rost R."/>
            <person name="Churcher C.M."/>
            <person name="Cooper J."/>
            <person name="Haydock S."/>
            <person name="van Driessche N."/>
            <person name="Cronin A."/>
            <person name="Goodhead I."/>
            <person name="Muzny D.M."/>
            <person name="Mourier T."/>
            <person name="Pain A."/>
            <person name="Lu M."/>
            <person name="Harper D."/>
            <person name="Lindsay R."/>
            <person name="Hauser H."/>
            <person name="James K.D."/>
            <person name="Quiles M."/>
            <person name="Madan Babu M."/>
            <person name="Saito T."/>
            <person name="Buchrieser C."/>
            <person name="Wardroper A."/>
            <person name="Felder M."/>
            <person name="Thangavelu M."/>
            <person name="Johnson D."/>
            <person name="Knights A."/>
            <person name="Loulseged H."/>
            <person name="Mungall K.L."/>
            <person name="Oliver K."/>
            <person name="Price C."/>
            <person name="Quail M.A."/>
            <person name="Urushihara H."/>
            <person name="Hernandez J."/>
            <person name="Rabbinowitsch E."/>
            <person name="Steffen D."/>
            <person name="Sanders M."/>
            <person name="Ma J."/>
            <person name="Kohara Y."/>
            <person name="Sharp S."/>
            <person name="Simmonds M.N."/>
            <person name="Spiegler S."/>
            <person name="Tivey A."/>
            <person name="Sugano S."/>
            <person name="White B."/>
            <person name="Walker D."/>
            <person name="Woodward J.R."/>
            <person name="Winckler T."/>
            <person name="Tanaka Y."/>
            <person name="Shaulsky G."/>
            <person name="Schleicher M."/>
            <person name="Weinstock G.M."/>
            <person name="Rosenthal A."/>
            <person name="Cox E.C."/>
            <person name="Chisholm R.L."/>
            <person name="Gibbs R.A."/>
            <person name="Loomis W.F."/>
            <person name="Platzer M."/>
            <person name="Kay R.R."/>
            <person name="Williams J.G."/>
            <person name="Dear P.H."/>
            <person name="Noegel A.A."/>
            <person name="Barrell B.G."/>
            <person name="Kuspa A."/>
        </authorList>
    </citation>
    <scope>NUCLEOTIDE SEQUENCE [LARGE SCALE GENOMIC DNA]</scope>
    <source>
        <strain>AX4</strain>
    </source>
</reference>
<reference key="2">
    <citation type="journal article" date="2003" name="Eukaryot. Cell">
        <title>Changing patterns of gene expression in Dictyostelium prestalk cell subtypes recognized by in situ hybridization with genes from microarray analyses.</title>
        <authorList>
            <person name="Maeda M."/>
            <person name="Sakamoto H."/>
            <person name="Iranfar N."/>
            <person name="Fuller D."/>
            <person name="Maruo T."/>
            <person name="Ogihara S."/>
            <person name="Morio T."/>
            <person name="Urushihara H."/>
            <person name="Tanaka Y."/>
            <person name="Loomis W.F."/>
        </authorList>
    </citation>
    <scope>IDENTIFICATION</scope>
</reference>
<reference key="3">
    <citation type="journal article" date="2008" name="J. Biol. Chem.">
        <title>Dissecting the functional role of polyketide synthases in Dictyostelium discoideum: biosynthesis of the differentiation regulating factor 4-methyl-5-pentylbenzene-1,3-diol.</title>
        <authorList>
            <person name="Ghosh R."/>
            <person name="Chhabra A."/>
            <person name="Phatale P.A."/>
            <person name="Samrat S.K."/>
            <person name="Sharma J."/>
            <person name="Gosain A."/>
            <person name="Mohanty D."/>
            <person name="Saran S."/>
            <person name="Gokhale R.S."/>
        </authorList>
    </citation>
    <scope>IDENTIFICATION</scope>
</reference>
<evidence type="ECO:0000255" key="1">
    <source>
        <dbReference type="PROSITE-ProRule" id="PRU01020"/>
    </source>
</evidence>
<keyword id="KW-0489">Methyltransferase</keyword>
<keyword id="KW-1185">Reference proteome</keyword>
<keyword id="KW-0949">S-adenosyl-L-methionine</keyword>
<keyword id="KW-0808">Transferase</keyword>
<organism>
    <name type="scientific">Dictyostelium discoideum</name>
    <name type="common">Social amoeba</name>
    <dbReference type="NCBI Taxonomy" id="44689"/>
    <lineage>
        <taxon>Eukaryota</taxon>
        <taxon>Amoebozoa</taxon>
        <taxon>Evosea</taxon>
        <taxon>Eumycetozoa</taxon>
        <taxon>Dictyostelia</taxon>
        <taxon>Dictyosteliales</taxon>
        <taxon>Dictyosteliaceae</taxon>
        <taxon>Dictyostelium</taxon>
    </lineage>
</organism>